<name>LP9B_ASPFU</name>
<keyword id="KW-0002">3D-structure</keyword>
<keyword id="KW-0119">Carbohydrate metabolism</keyword>
<keyword id="KW-0136">Cellulose degradation</keyword>
<keyword id="KW-1015">Disulfide bond</keyword>
<keyword id="KW-0325">Glycoprotein</keyword>
<keyword id="KW-0488">Methylation</keyword>
<keyword id="KW-0503">Monooxygenase</keyword>
<keyword id="KW-0560">Oxidoreductase</keyword>
<keyword id="KW-0624">Polysaccharide degradation</keyword>
<keyword id="KW-1185">Reference proteome</keyword>
<keyword id="KW-0964">Secreted</keyword>
<keyword id="KW-0732">Signal</keyword>
<proteinExistence type="evidence at protein level"/>
<accession>Q4WP32</accession>
<comment type="function">
    <text evidence="4 7 8 9">Lytic polysaccharide monooxygenase (LPMO) that depolymerizes crystalline and amorphous polysaccharides via the oxidation of scissile alpha- or beta-(1-4)-glycosidic bonds, yielding C1 and C4 oxidation products (PubMed:28750348, PubMed:31237199, PubMed:33541573). Catalysis by LPMOs requires the reduction of the active-site copper from Cu(II) to Cu(I) by a reducing agent and H(2)O(2) or O(2) as a cosubstrate (PubMed:31237199). Shows activity on phosphoric acid swollen cellulose, on NaOH pretreated soy spent flakes as well as on crystalline cellulose (Avicel) (PubMed:28750348). Does not have a positive effect on cel6A activity, but acts synergistically with endoglucanase egl7 (PubMed:33383972).</text>
</comment>
<comment type="catalytic activity">
    <reaction evidence="4 7 8 9">
        <text>[(1-&gt;4)-beta-D-glucosyl]n+m + reduced acceptor + O2 = 4-dehydro-beta-D-glucosyl-[(1-&gt;4)-beta-D-glucosyl]n-1 + [(1-&gt;4)-beta-D-glucosyl]m + acceptor + H2O.</text>
        <dbReference type="EC" id="1.14.99.56"/>
    </reaction>
</comment>
<comment type="cofactor">
    <cofactor evidence="6">
        <name>Cu(2+)</name>
        <dbReference type="ChEBI" id="CHEBI:29036"/>
    </cofactor>
    <text evidence="6">Binds 1 copper ion per subunit.</text>
</comment>
<comment type="biophysicochemical properties">
    <phDependence>
        <text evidence="9">Optimum pH is 8.0.</text>
    </phDependence>
    <temperatureDependence>
        <text evidence="8">Optimum temperature is 60 degrees Celsius.</text>
    </temperatureDependence>
</comment>
<comment type="subcellular location">
    <subcellularLocation>
        <location evidence="14">Secreted</location>
    </subcellularLocation>
</comment>
<comment type="induction">
    <text evidence="5 7">Expression is highly induced in complex biomass like sugarcane bagasse (SEB), Avicel(R) PH-101, and CM-cellulose.</text>
</comment>
<comment type="PTM">
    <text evidence="4">The catalytically essential N-terminal histidine His-22 is post-translationally modified by methylation to prevent protonation of the histidine side chain, and protect the critical active site of the enzyme from oxidative damage.</text>
</comment>
<comment type="biotechnology">
    <text evidence="4 7 8 9">Lignocellulose is the most abundant polymeric composite on Earth and is a recalcitrant but promising renewable substrate for industrial biotechnology applications. Together with cellobiose dehydrogenases (CDHs) an enzymatic system capable of oxidative cellulose cleavage is formed, which increases the efficiency of cellulases and put LPMOs at focus of biofuel research.</text>
</comment>
<comment type="similarity">
    <text evidence="14">Belongs to the polysaccharide monooxygenase AA9 family.</text>
</comment>
<evidence type="ECO:0000250" key="1">
    <source>
        <dbReference type="UniProtKB" id="Q1K8B6"/>
    </source>
</evidence>
<evidence type="ECO:0000255" key="2"/>
<evidence type="ECO:0000255" key="3">
    <source>
        <dbReference type="PROSITE-ProRule" id="PRU00498"/>
    </source>
</evidence>
<evidence type="ECO:0000269" key="4">
    <source>
    </source>
</evidence>
<evidence type="ECO:0000269" key="5">
    <source>
    </source>
</evidence>
<evidence type="ECO:0000269" key="6">
    <source>
    </source>
</evidence>
<evidence type="ECO:0000269" key="7">
    <source>
    </source>
</evidence>
<evidence type="ECO:0000269" key="8">
    <source>
    </source>
</evidence>
<evidence type="ECO:0000269" key="9">
    <source>
    </source>
</evidence>
<evidence type="ECO:0000303" key="10">
    <source>
    </source>
</evidence>
<evidence type="ECO:0000303" key="11">
    <source>
    </source>
</evidence>
<evidence type="ECO:0000303" key="12">
    <source>
    </source>
</evidence>
<evidence type="ECO:0000303" key="13">
    <source>
    </source>
</evidence>
<evidence type="ECO:0000305" key="14"/>
<evidence type="ECO:0007744" key="15">
    <source>
        <dbReference type="PDB" id="5X6A"/>
    </source>
</evidence>
<evidence type="ECO:0007744" key="16">
    <source>
        <dbReference type="PDB" id="6H1Z"/>
    </source>
</evidence>
<evidence type="ECO:0007744" key="17">
    <source>
        <dbReference type="PDB" id="6HA5"/>
    </source>
</evidence>
<evidence type="ECO:0007744" key="18">
    <source>
        <dbReference type="PDB" id="6HAQ"/>
    </source>
</evidence>
<evidence type="ECO:0007829" key="19">
    <source>
        <dbReference type="PDB" id="6HAQ"/>
    </source>
</evidence>
<feature type="signal peptide" evidence="2">
    <location>
        <begin position="1"/>
        <end position="21"/>
    </location>
</feature>
<feature type="chain" id="PRO_5004246374" description="AA9 family lytic polysaccharide monooxygenase B">
    <location>
        <begin position="22"/>
        <end position="250"/>
    </location>
</feature>
<feature type="binding site" evidence="6 16 17 18">
    <location>
        <position position="22"/>
    </location>
    <ligand>
        <name>Cu(2+)</name>
        <dbReference type="ChEBI" id="CHEBI:29036"/>
        <note>catalytic</note>
    </ligand>
</feature>
<feature type="binding site" evidence="6 16 17 18">
    <location>
        <position position="107"/>
    </location>
    <ligand>
        <name>Cu(2+)</name>
        <dbReference type="ChEBI" id="CHEBI:29036"/>
        <note>catalytic</note>
    </ligand>
</feature>
<feature type="binding site" evidence="1">
    <location>
        <position position="185"/>
    </location>
    <ligand>
        <name>O2</name>
        <dbReference type="ChEBI" id="CHEBI:15379"/>
    </ligand>
</feature>
<feature type="binding site" evidence="1">
    <location>
        <position position="194"/>
    </location>
    <ligand>
        <name>O2</name>
        <dbReference type="ChEBI" id="CHEBI:15379"/>
    </ligand>
</feature>
<feature type="binding site" evidence="6 17">
    <location>
        <position position="196"/>
    </location>
    <ligand>
        <name>Cu(2+)</name>
        <dbReference type="ChEBI" id="CHEBI:29036"/>
        <note>catalytic</note>
    </ligand>
</feature>
<feature type="modified residue" description="Methylhistidine" evidence="4">
    <location>
        <position position="22"/>
    </location>
</feature>
<feature type="glycosylation site" description="N-linked (GlcNAc...) asparagine" evidence="3">
    <location>
        <position position="159"/>
    </location>
</feature>
<feature type="disulfide bond" evidence="6 15 16">
    <location>
        <begin position="77"/>
        <end position="199"/>
    </location>
</feature>
<feature type="disulfide bond" evidence="6 15 16">
    <location>
        <begin position="118"/>
        <end position="122"/>
    </location>
</feature>
<feature type="mutagenesis site" description="Stabilizes the folded state of the protein and leads to a melting temperature (Tm) improvement of 6 degrees Celsius." evidence="6">
    <original>D</original>
    <variation>S</variation>
    <location>
        <position position="152"/>
    </location>
</feature>
<feature type="strand" evidence="19">
    <location>
        <begin position="25"/>
        <end position="30"/>
    </location>
</feature>
<feature type="strand" evidence="19">
    <location>
        <begin position="33"/>
        <end position="36"/>
    </location>
</feature>
<feature type="turn" evidence="19">
    <location>
        <begin position="40"/>
        <end position="42"/>
    </location>
</feature>
<feature type="helix" evidence="19">
    <location>
        <begin position="43"/>
        <end position="45"/>
    </location>
</feature>
<feature type="strand" evidence="19">
    <location>
        <begin position="46"/>
        <end position="48"/>
    </location>
</feature>
<feature type="helix" evidence="19">
    <location>
        <begin position="67"/>
        <end position="69"/>
    </location>
</feature>
<feature type="helix" evidence="19">
    <location>
        <begin position="74"/>
        <end position="77"/>
    </location>
</feature>
<feature type="strand" evidence="19">
    <location>
        <begin position="88"/>
        <end position="91"/>
    </location>
</feature>
<feature type="strand" evidence="19">
    <location>
        <begin position="95"/>
        <end position="101"/>
    </location>
</feature>
<feature type="strand" evidence="19">
    <location>
        <begin position="111"/>
        <end position="117"/>
    </location>
</feature>
<feature type="turn" evidence="19">
    <location>
        <begin position="122"/>
        <end position="124"/>
    </location>
</feature>
<feature type="helix" evidence="19">
    <location>
        <begin position="127"/>
        <end position="129"/>
    </location>
</feature>
<feature type="strand" evidence="19">
    <location>
        <begin position="131"/>
        <end position="138"/>
    </location>
</feature>
<feature type="strand" evidence="19">
    <location>
        <begin position="140"/>
        <end position="142"/>
    </location>
</feature>
<feature type="helix" evidence="19">
    <location>
        <begin position="151"/>
        <end position="157"/>
    </location>
</feature>
<feature type="turn" evidence="19">
    <location>
        <begin position="158"/>
        <end position="160"/>
    </location>
</feature>
<feature type="strand" evidence="19">
    <location>
        <begin position="161"/>
        <end position="165"/>
    </location>
</feature>
<feature type="strand" evidence="19">
    <location>
        <begin position="173"/>
        <end position="183"/>
    </location>
</feature>
<feature type="turn" evidence="19">
    <location>
        <begin position="185"/>
        <end position="188"/>
    </location>
</feature>
<feature type="strand" evidence="19">
    <location>
        <begin position="194"/>
        <end position="206"/>
    </location>
</feature>
<feature type="helix" evidence="19">
    <location>
        <begin position="217"/>
        <end position="219"/>
    </location>
</feature>
<feature type="turn" evidence="19">
    <location>
        <begin position="226"/>
        <end position="228"/>
    </location>
</feature>
<organism>
    <name type="scientific">Aspergillus fumigatus (strain ATCC MYA-4609 / CBS 101355 / FGSC A1100 / Af293)</name>
    <name type="common">Neosartorya fumigata</name>
    <dbReference type="NCBI Taxonomy" id="330879"/>
    <lineage>
        <taxon>Eukaryota</taxon>
        <taxon>Fungi</taxon>
        <taxon>Dikarya</taxon>
        <taxon>Ascomycota</taxon>
        <taxon>Pezizomycotina</taxon>
        <taxon>Eurotiomycetes</taxon>
        <taxon>Eurotiomycetidae</taxon>
        <taxon>Eurotiales</taxon>
        <taxon>Aspergillaceae</taxon>
        <taxon>Aspergillus</taxon>
        <taxon>Aspergillus subgen. Fumigati</taxon>
    </lineage>
</organism>
<reference key="1">
    <citation type="journal article" date="2005" name="Nature">
        <title>Genomic sequence of the pathogenic and allergenic filamentous fungus Aspergillus fumigatus.</title>
        <authorList>
            <person name="Nierman W.C."/>
            <person name="Pain A."/>
            <person name="Anderson M.J."/>
            <person name="Wortman J.R."/>
            <person name="Kim H.S."/>
            <person name="Arroyo J."/>
            <person name="Berriman M."/>
            <person name="Abe K."/>
            <person name="Archer D.B."/>
            <person name="Bermejo C."/>
            <person name="Bennett J.W."/>
            <person name="Bowyer P."/>
            <person name="Chen D."/>
            <person name="Collins M."/>
            <person name="Coulsen R."/>
            <person name="Davies R."/>
            <person name="Dyer P.S."/>
            <person name="Farman M.L."/>
            <person name="Fedorova N."/>
            <person name="Fedorova N.D."/>
            <person name="Feldblyum T.V."/>
            <person name="Fischer R."/>
            <person name="Fosker N."/>
            <person name="Fraser A."/>
            <person name="Garcia J.L."/>
            <person name="Garcia M.J."/>
            <person name="Goble A."/>
            <person name="Goldman G.H."/>
            <person name="Gomi K."/>
            <person name="Griffith-Jones S."/>
            <person name="Gwilliam R."/>
            <person name="Haas B.J."/>
            <person name="Haas H."/>
            <person name="Harris D.E."/>
            <person name="Horiuchi H."/>
            <person name="Huang J."/>
            <person name="Humphray S."/>
            <person name="Jimenez J."/>
            <person name="Keller N."/>
            <person name="Khouri H."/>
            <person name="Kitamoto K."/>
            <person name="Kobayashi T."/>
            <person name="Konzack S."/>
            <person name="Kulkarni R."/>
            <person name="Kumagai T."/>
            <person name="Lafton A."/>
            <person name="Latge J.-P."/>
            <person name="Li W."/>
            <person name="Lord A."/>
            <person name="Lu C."/>
            <person name="Majoros W.H."/>
            <person name="May G.S."/>
            <person name="Miller B.L."/>
            <person name="Mohamoud Y."/>
            <person name="Molina M."/>
            <person name="Monod M."/>
            <person name="Mouyna I."/>
            <person name="Mulligan S."/>
            <person name="Murphy L.D."/>
            <person name="O'Neil S."/>
            <person name="Paulsen I."/>
            <person name="Penalva M.A."/>
            <person name="Pertea M."/>
            <person name="Price C."/>
            <person name="Pritchard B.L."/>
            <person name="Quail M.A."/>
            <person name="Rabbinowitsch E."/>
            <person name="Rawlins N."/>
            <person name="Rajandream M.A."/>
            <person name="Reichard U."/>
            <person name="Renauld H."/>
            <person name="Robson G.D."/>
            <person name="Rodriguez de Cordoba S."/>
            <person name="Rodriguez-Pena J.M."/>
            <person name="Ronning C.M."/>
            <person name="Rutter S."/>
            <person name="Salzberg S.L."/>
            <person name="Sanchez M."/>
            <person name="Sanchez-Ferrero J.C."/>
            <person name="Saunders D."/>
            <person name="Seeger K."/>
            <person name="Squares R."/>
            <person name="Squares S."/>
            <person name="Takeuchi M."/>
            <person name="Tekaia F."/>
            <person name="Turner G."/>
            <person name="Vazquez de Aldana C.R."/>
            <person name="Weidman J."/>
            <person name="White O."/>
            <person name="Woodward J.R."/>
            <person name="Yu J.-H."/>
            <person name="Fraser C.M."/>
            <person name="Galagan J.E."/>
            <person name="Asai K."/>
            <person name="Machida M."/>
            <person name="Hall N."/>
            <person name="Barrell B.G."/>
            <person name="Denning D.W."/>
        </authorList>
    </citation>
    <scope>NUCLEOTIDE SEQUENCE [LARGE SCALE GENOMIC DNA]</scope>
    <source>
        <strain>ATCC MYA-4609 / CBS 101355 / FGSC A1100 / Af293</strain>
    </source>
</reference>
<reference key="2">
    <citation type="journal article" date="2017" name="Carbohydr. Res.">
        <title>A comparative study on the activity of fungal lytic polysaccharide monooxygenases for the depolymerization of cellulose in soybean spent flakes.</title>
        <authorList>
            <person name="Pierce B.C."/>
            <person name="Agger J.W."/>
            <person name="Zhang Z."/>
            <person name="Wichmann J."/>
            <person name="Meyer A.S."/>
        </authorList>
    </citation>
    <scope>FUNCTION</scope>
    <scope>CATALYTIC ACTIVITY</scope>
    <scope>METHYLATION AT HIS-22</scope>
    <scope>BIOTECHNOLOGY</scope>
</reference>
<reference key="3">
    <citation type="journal article" date="2018" name="BMC Genomics">
        <title>Transcriptome and secretome analysis of Aspergillus fumigatus in the presence of sugarcane bagasse.</title>
        <authorList>
            <person name="de Gouvea P.F."/>
            <person name="Bernardi A.V."/>
            <person name="Gerolamo L.E."/>
            <person name="de Souza Santos E."/>
            <person name="Riano-Pachon D.M."/>
            <person name="Uyemura S.A."/>
            <person name="Dinamarco T.M."/>
        </authorList>
    </citation>
    <scope>INDUCTION</scope>
</reference>
<reference key="4">
    <citation type="journal article" date="2019" name="Protein Pept. Lett.">
        <title>Lytic Polysaccharide Monooxygenase from Aspergillus fumigatus can Improve Enzymatic Cocktail Activity During Sugarcane Bagasse Hydrolysis.</title>
        <authorList>
            <person name="de Gouvea P.F."/>
            <person name="Gerolamo L.E."/>
            <person name="Bernardi A.V."/>
            <person name="Pereira L.M.S."/>
            <person name="Uyemura S.A."/>
            <person name="Dinamarco T.M."/>
        </authorList>
    </citation>
    <scope>FUNCTION</scope>
    <scope>CATALYTIC ACTIVITY</scope>
    <scope>BIOTECHNOLOGY</scope>
</reference>
<reference key="5">
    <citation type="journal article" date="2020" name="Int. J. Mol. Sci.">
        <title>LPMO AfAA9_B and Cellobiohydrolase AfCel6A from A. fumigatus Boost Enzymatic Saccharification Activity of Cellulase Cocktail.</title>
        <authorList>
            <person name="Bernardi A.V."/>
            <person name="Gerolamo L.E."/>
            <person name="de Gouvea P.F."/>
            <person name="Yonamine D.K."/>
            <person name="Pereira L.M.S."/>
            <person name="de Oliveira A.H.C."/>
            <person name="Uyemura S.A."/>
            <person name="Dinamarco T.M."/>
        </authorList>
    </citation>
    <scope>FUNCTION</scope>
    <scope>CATALYTIC ACTIVITY</scope>
    <scope>BIOPHYSICOCHEMICAL PROPERTIES</scope>
    <scope>BIOTECHNOLOGY</scope>
</reference>
<reference key="6">
    <citation type="journal article" date="2021" name="Enzyme Microb. Technol.">
        <title>Comparative analysis of two recombinant LPMOs from Aspergillus fumigatus and their effects on sugarcane bagasse saccharification.</title>
        <authorList>
            <person name="Velasco J."/>
            <person name="de Oliveira Arnoldi Pellegrini V."/>
            <person name="Sepulchro A.G.V."/>
            <person name="Kadowaki M.A.S."/>
            <person name="Santo M.C.E."/>
            <person name="Polikarpov I."/>
            <person name="Segato F."/>
        </authorList>
    </citation>
    <scope>FUNCTION</scope>
    <scope>CATALYTIC ACTIVITY</scope>
    <scope>BIOPHYSICOCHEMICAL PROPERTIES</scope>
    <scope>BIOTECHNOLOGY</scope>
</reference>
<reference key="7">
    <citation type="journal article" date="2022" name="Microbiol. Spectr.">
        <title>Deletion of AA9 Lytic Polysaccharide Monooxygenases Impacts A. nidulans Secretome and Growth on Lignocellulose.</title>
        <authorList>
            <person name="Terrasan C.R.F."/>
            <person name="Rubio M.V."/>
            <person name="Gerhardt J.A."/>
            <person name="Cairo J.P.F."/>
            <person name="Contesini F.J."/>
            <person name="Zubieta M.P."/>
            <person name="Figueiredo F.L."/>
            <person name="Valadares F.L."/>
            <person name="Correa T.L.R."/>
            <person name="Murakami M.T."/>
            <person name="Franco T.T."/>
            <person name="Davies G.J."/>
            <person name="Walton P.H."/>
            <person name="Damasio A."/>
        </authorList>
    </citation>
    <scope>FUNCTION</scope>
</reference>
<reference evidence="15" key="8">
    <citation type="submission" date="2017-02" db="PDB data bank">
        <title>Crystal structure of an endoglucanase PMO-5.</title>
        <authorList>
            <person name="Shen Q."/>
        </authorList>
    </citation>
    <scope>X-RAY CRYSTALLOGRAPHY (1.70 ANGSTROMS) OF 22-250</scope>
    <scope>DISULFIDE BONDS</scope>
</reference>
<reference evidence="16 17 18" key="9">
    <citation type="journal article" date="2018" name="Carbohydr. Res.">
        <title>Structure of a lytic polysaccharide monooxygenase from Aspergillus fumigatus and an engineered thermostable variant.</title>
        <authorList>
            <person name="Lo Leggio L."/>
            <person name="Weihe C.D."/>
            <person name="Poulsen J.C.N."/>
            <person name="Sweeney M."/>
            <person name="Rasmussen F."/>
            <person name="Lin J."/>
            <person name="De Maria L."/>
            <person name="Wogulis M."/>
        </authorList>
    </citation>
    <scope>X-RAY CRYSTALLOGRAPHY (1.37 ANGSTROMS) OF 22-250 IN COMPLEX WITH COPPER</scope>
    <scope>DISULFIDE BONDS</scope>
    <scope>MUTAGENESIS OF ASP-152</scope>
</reference>
<sequence length="250" mass="26142">MTLSKITSIAGLLASASLVAGHGFVSGIVADGKYYGGYLVNQYPYMSNPPDTIAWSTTATDLGFVDGTGYQSPDIICHRDAKNGKLTATVAAGSQIEFQWTTWPESHHGPLITYLAPCNGDCATVDKTTLKFVKIAAQGLIDGSNPPGVWADDEMIANNNTATVTIPASYAPGNYVLRHEIIALHSAGNLNGAQNYPQCFNIQITGGGSAQGSGTAGTSLYKNTDPGIKFDIYSDLSGGYPIPGPALFNA</sequence>
<dbReference type="EC" id="1.14.99.56" evidence="4 7 8 9"/>
<dbReference type="EMBL" id="AAHF01000005">
    <property type="protein sequence ID" value="EAL90002.1"/>
    <property type="molecule type" value="Genomic_DNA"/>
</dbReference>
<dbReference type="RefSeq" id="XP_752040.1">
    <property type="nucleotide sequence ID" value="XM_746947.1"/>
</dbReference>
<dbReference type="PDB" id="5X6A">
    <property type="method" value="X-ray"/>
    <property type="resolution" value="1.70 A"/>
    <property type="chains" value="A/B=22-250"/>
</dbReference>
<dbReference type="PDB" id="6H1Z">
    <property type="method" value="X-ray"/>
    <property type="resolution" value="1.57 A"/>
    <property type="chains" value="A/B=22-250"/>
</dbReference>
<dbReference type="PDB" id="6HA5">
    <property type="method" value="X-ray"/>
    <property type="resolution" value="1.87 A"/>
    <property type="chains" value="A/B=22-250"/>
</dbReference>
<dbReference type="PDB" id="6HAQ">
    <property type="method" value="X-ray"/>
    <property type="resolution" value="1.37 A"/>
    <property type="chains" value="A/B=22-250"/>
</dbReference>
<dbReference type="PDBsum" id="5X6A"/>
<dbReference type="PDBsum" id="6H1Z"/>
<dbReference type="PDBsum" id="6HA5"/>
<dbReference type="PDBsum" id="6HAQ"/>
<dbReference type="SMR" id="Q4WP32"/>
<dbReference type="STRING" id="330879.Q4WP32"/>
<dbReference type="EnsemblFungi" id="EAL90002">
    <property type="protein sequence ID" value="EAL90002"/>
    <property type="gene ID" value="AFUA_4G07850"/>
</dbReference>
<dbReference type="GeneID" id="3509671"/>
<dbReference type="KEGG" id="afm:AFUA_4G07850"/>
<dbReference type="VEuPathDB" id="FungiDB:Afu4g07850"/>
<dbReference type="eggNOG" id="ENOG502RY3D">
    <property type="taxonomic scope" value="Eukaryota"/>
</dbReference>
<dbReference type="HOGENOM" id="CLU_031730_1_3_1"/>
<dbReference type="InParanoid" id="Q4WP32"/>
<dbReference type="OMA" id="PPDTIAW"/>
<dbReference type="OrthoDB" id="4849160at2759"/>
<dbReference type="Proteomes" id="UP000002530">
    <property type="component" value="Chromosome 4"/>
</dbReference>
<dbReference type="GO" id="GO:0005576">
    <property type="term" value="C:extracellular region"/>
    <property type="evidence" value="ECO:0007669"/>
    <property type="project" value="UniProtKB-SubCell"/>
</dbReference>
<dbReference type="GO" id="GO:0004497">
    <property type="term" value="F:monooxygenase activity"/>
    <property type="evidence" value="ECO:0007669"/>
    <property type="project" value="UniProtKB-KW"/>
</dbReference>
<dbReference type="GO" id="GO:0030245">
    <property type="term" value="P:cellulose catabolic process"/>
    <property type="evidence" value="ECO:0007669"/>
    <property type="project" value="UniProtKB-KW"/>
</dbReference>
<dbReference type="CDD" id="cd21175">
    <property type="entry name" value="LPMO_AA9"/>
    <property type="match status" value="1"/>
</dbReference>
<dbReference type="Gene3D" id="2.70.50.70">
    <property type="match status" value="1"/>
</dbReference>
<dbReference type="InterPro" id="IPR049892">
    <property type="entry name" value="AA9"/>
</dbReference>
<dbReference type="InterPro" id="IPR005103">
    <property type="entry name" value="AA9_LPMO"/>
</dbReference>
<dbReference type="PANTHER" id="PTHR33353:SF34">
    <property type="entry name" value="ENDO-BETA-1,4-GLUCANASE D"/>
    <property type="match status" value="1"/>
</dbReference>
<dbReference type="PANTHER" id="PTHR33353">
    <property type="entry name" value="PUTATIVE (AFU_ORTHOLOGUE AFUA_1G12560)-RELATED"/>
    <property type="match status" value="1"/>
</dbReference>
<dbReference type="Pfam" id="PF03443">
    <property type="entry name" value="AA9"/>
    <property type="match status" value="1"/>
</dbReference>
<gene>
    <name evidence="11" type="primary">AA9_B</name>
    <name evidence="12" type="synonym">AA9B</name>
    <name evidence="10" type="synonym">Aspfu5</name>
    <name type="ORF">AFUA_4G07850</name>
</gene>
<protein>
    <recommendedName>
        <fullName evidence="11">AA9 family lytic polysaccharide monooxygenase B</fullName>
        <shortName evidence="13">AfAA9B</shortName>
        <shortName evidence="11">AfAA9_B</shortName>
        <ecNumber evidence="4 7 8 9">1.14.99.56</ecNumber>
    </recommendedName>
    <alternativeName>
        <fullName evidence="14">Cellulase AA9_B</fullName>
    </alternativeName>
    <alternativeName>
        <fullName evidence="14">Endo-beta-1,4-glucanase AA9_B</fullName>
        <shortName evidence="14">Endoglucanase AA9_B</shortName>
    </alternativeName>
    <alternativeName>
        <fullName evidence="14">Glycosyl hydrolase 61 family protein AA9_B</fullName>
    </alternativeName>
</protein>